<accession>B5RD57</accession>
<sequence length="245" mass="27238">MSQSGSVLRRNGFTFKQFFVAHDRCAMKVGTDGILLGAWAPVADVKRILDIGTGSGLLALMLAQRTDDNVPIDAVELDAGAAMQAQENVAHSPWPHRITVHTDDIQSWAPRQTVRFDLIISNPPYYEPGVECATPQREQARYTATLDHQTLLAIAADCITEDGFFCVVLPEQIGNAFTQQALNMGWHLRLRTDVAENEARLPHRVLLAFSPQAGECFSDRLVIRGSDQHYSESYTALTQAFYLFM</sequence>
<feature type="chain" id="PRO_0000387406" description="tRNA1(Val) (adenine(37)-N6)-methyltransferase">
    <location>
        <begin position="1"/>
        <end position="245"/>
    </location>
</feature>
<dbReference type="EC" id="2.1.1.223" evidence="1"/>
<dbReference type="EMBL" id="AM933173">
    <property type="protein sequence ID" value="CAR38443.1"/>
    <property type="molecule type" value="Genomic_DNA"/>
</dbReference>
<dbReference type="SMR" id="B5RD57"/>
<dbReference type="KEGG" id="seg:SG2626"/>
<dbReference type="HOGENOM" id="CLU_061983_0_0_6"/>
<dbReference type="Proteomes" id="UP000008321">
    <property type="component" value="Chromosome"/>
</dbReference>
<dbReference type="GO" id="GO:0005737">
    <property type="term" value="C:cytoplasm"/>
    <property type="evidence" value="ECO:0007669"/>
    <property type="project" value="UniProtKB-SubCell"/>
</dbReference>
<dbReference type="GO" id="GO:0003676">
    <property type="term" value="F:nucleic acid binding"/>
    <property type="evidence" value="ECO:0007669"/>
    <property type="project" value="InterPro"/>
</dbReference>
<dbReference type="GO" id="GO:0016430">
    <property type="term" value="F:tRNA (adenine-N6)-methyltransferase activity"/>
    <property type="evidence" value="ECO:0007669"/>
    <property type="project" value="UniProtKB-UniRule"/>
</dbReference>
<dbReference type="GO" id="GO:0032259">
    <property type="term" value="P:methylation"/>
    <property type="evidence" value="ECO:0007669"/>
    <property type="project" value="UniProtKB-KW"/>
</dbReference>
<dbReference type="GO" id="GO:0008033">
    <property type="term" value="P:tRNA processing"/>
    <property type="evidence" value="ECO:0007669"/>
    <property type="project" value="UniProtKB-UniRule"/>
</dbReference>
<dbReference type="CDD" id="cd02440">
    <property type="entry name" value="AdoMet_MTases"/>
    <property type="match status" value="1"/>
</dbReference>
<dbReference type="Gene3D" id="3.40.50.150">
    <property type="entry name" value="Vaccinia Virus protein VP39"/>
    <property type="match status" value="1"/>
</dbReference>
<dbReference type="HAMAP" id="MF_01872">
    <property type="entry name" value="tRNA_methyltr_YfiC"/>
    <property type="match status" value="1"/>
</dbReference>
<dbReference type="InterPro" id="IPR002052">
    <property type="entry name" value="DNA_methylase_N6_adenine_CS"/>
</dbReference>
<dbReference type="InterPro" id="IPR029063">
    <property type="entry name" value="SAM-dependent_MTases_sf"/>
</dbReference>
<dbReference type="InterPro" id="IPR007848">
    <property type="entry name" value="Small_mtfrase_dom"/>
</dbReference>
<dbReference type="InterPro" id="IPR050210">
    <property type="entry name" value="tRNA_Adenine-N(6)_MTase"/>
</dbReference>
<dbReference type="InterPro" id="IPR022882">
    <property type="entry name" value="tRNA_adenine-N6_MeTrfase"/>
</dbReference>
<dbReference type="NCBIfam" id="NF047853">
    <property type="entry name" value="tRm6a37MtseTrmN"/>
    <property type="match status" value="1"/>
</dbReference>
<dbReference type="PANTHER" id="PTHR47739">
    <property type="entry name" value="TRNA1(VAL) (ADENINE(37)-N6)-METHYLTRANSFERASE"/>
    <property type="match status" value="1"/>
</dbReference>
<dbReference type="PANTHER" id="PTHR47739:SF1">
    <property type="entry name" value="TRNA1(VAL) (ADENINE(37)-N6)-METHYLTRANSFERASE"/>
    <property type="match status" value="1"/>
</dbReference>
<dbReference type="Pfam" id="PF05175">
    <property type="entry name" value="MTS"/>
    <property type="match status" value="1"/>
</dbReference>
<dbReference type="SUPFAM" id="SSF53335">
    <property type="entry name" value="S-adenosyl-L-methionine-dependent methyltransferases"/>
    <property type="match status" value="1"/>
</dbReference>
<dbReference type="PROSITE" id="PS00092">
    <property type="entry name" value="N6_MTASE"/>
    <property type="match status" value="1"/>
</dbReference>
<gene>
    <name evidence="1" type="primary">yfiC</name>
    <name type="ordered locus">SG2626</name>
</gene>
<protein>
    <recommendedName>
        <fullName evidence="1">tRNA1(Val) (adenine(37)-N6)-methyltransferase</fullName>
        <ecNumber evidence="1">2.1.1.223</ecNumber>
    </recommendedName>
    <alternativeName>
        <fullName evidence="1">tRNA m6A37 methyltransferase</fullName>
    </alternativeName>
</protein>
<comment type="function">
    <text evidence="1">Specifically methylates the adenine in position 37 of tRNA(1)(Val) (anticodon cmo5UAC).</text>
</comment>
<comment type="catalytic activity">
    <reaction evidence="1">
        <text>adenosine(37) in tRNA1(Val) + S-adenosyl-L-methionine = N(6)-methyladenosine(37) in tRNA1(Val) + S-adenosyl-L-homocysteine + H(+)</text>
        <dbReference type="Rhea" id="RHEA:43160"/>
        <dbReference type="Rhea" id="RHEA-COMP:10369"/>
        <dbReference type="Rhea" id="RHEA-COMP:10370"/>
        <dbReference type="ChEBI" id="CHEBI:15378"/>
        <dbReference type="ChEBI" id="CHEBI:57856"/>
        <dbReference type="ChEBI" id="CHEBI:59789"/>
        <dbReference type="ChEBI" id="CHEBI:74411"/>
        <dbReference type="ChEBI" id="CHEBI:74449"/>
        <dbReference type="EC" id="2.1.1.223"/>
    </reaction>
</comment>
<comment type="subcellular location">
    <subcellularLocation>
        <location evidence="1">Cytoplasm</location>
    </subcellularLocation>
</comment>
<comment type="similarity">
    <text evidence="1">Belongs to the methyltransferase superfamily. tRNA (adenine-N(6)-)-methyltransferase family.</text>
</comment>
<keyword id="KW-0963">Cytoplasm</keyword>
<keyword id="KW-0489">Methyltransferase</keyword>
<keyword id="KW-0949">S-adenosyl-L-methionine</keyword>
<keyword id="KW-0808">Transferase</keyword>
<keyword id="KW-0819">tRNA processing</keyword>
<proteinExistence type="inferred from homology"/>
<reference key="1">
    <citation type="journal article" date="2008" name="Genome Res.">
        <title>Comparative genome analysis of Salmonella enteritidis PT4 and Salmonella gallinarum 287/91 provides insights into evolutionary and host adaptation pathways.</title>
        <authorList>
            <person name="Thomson N.R."/>
            <person name="Clayton D.J."/>
            <person name="Windhorst D."/>
            <person name="Vernikos G."/>
            <person name="Davidson S."/>
            <person name="Churcher C."/>
            <person name="Quail M.A."/>
            <person name="Stevens M."/>
            <person name="Jones M.A."/>
            <person name="Watson M."/>
            <person name="Barron A."/>
            <person name="Layton A."/>
            <person name="Pickard D."/>
            <person name="Kingsley R.A."/>
            <person name="Bignell A."/>
            <person name="Clark L."/>
            <person name="Harris B."/>
            <person name="Ormond D."/>
            <person name="Abdellah Z."/>
            <person name="Brooks K."/>
            <person name="Cherevach I."/>
            <person name="Chillingworth T."/>
            <person name="Woodward J."/>
            <person name="Norberczak H."/>
            <person name="Lord A."/>
            <person name="Arrowsmith C."/>
            <person name="Jagels K."/>
            <person name="Moule S."/>
            <person name="Mungall K."/>
            <person name="Saunders M."/>
            <person name="Whitehead S."/>
            <person name="Chabalgoity J.A."/>
            <person name="Maskell D."/>
            <person name="Humphreys T."/>
            <person name="Roberts M."/>
            <person name="Barrow P.A."/>
            <person name="Dougan G."/>
            <person name="Parkhill J."/>
        </authorList>
    </citation>
    <scope>NUCLEOTIDE SEQUENCE [LARGE SCALE GENOMIC DNA]</scope>
    <source>
        <strain>287/91 / NCTC 13346</strain>
    </source>
</reference>
<organism>
    <name type="scientific">Salmonella gallinarum (strain 287/91 / NCTC 13346)</name>
    <dbReference type="NCBI Taxonomy" id="550538"/>
    <lineage>
        <taxon>Bacteria</taxon>
        <taxon>Pseudomonadati</taxon>
        <taxon>Pseudomonadota</taxon>
        <taxon>Gammaproteobacteria</taxon>
        <taxon>Enterobacterales</taxon>
        <taxon>Enterobacteriaceae</taxon>
        <taxon>Salmonella</taxon>
    </lineage>
</organism>
<name>TRMN6_SALG2</name>
<evidence type="ECO:0000255" key="1">
    <source>
        <dbReference type="HAMAP-Rule" id="MF_01872"/>
    </source>
</evidence>